<accession>Q9LQ47</accession>
<dbReference type="EMBL" id="AC009317">
    <property type="protein sequence ID" value="AAF79769.1"/>
    <property type="molecule type" value="Genomic_DNA"/>
</dbReference>
<dbReference type="EMBL" id="CP002684">
    <property type="protein sequence ID" value="AEE33602.1"/>
    <property type="molecule type" value="Genomic_DNA"/>
</dbReference>
<dbReference type="RefSeq" id="NP_683449.1">
    <property type="nucleotide sequence ID" value="NM_148608.1"/>
</dbReference>
<dbReference type="FunCoup" id="Q9LQ47">
    <property type="interactions" value="33"/>
</dbReference>
<dbReference type="STRING" id="3702.Q9LQ47"/>
<dbReference type="PaxDb" id="3702-AT1G59675.1"/>
<dbReference type="EnsemblPlants" id="AT1G59675.1">
    <property type="protein sequence ID" value="AT1G59675.1"/>
    <property type="gene ID" value="AT1G59675"/>
</dbReference>
<dbReference type="GeneID" id="842258"/>
<dbReference type="Gramene" id="AT1G59675.1">
    <property type="protein sequence ID" value="AT1G59675.1"/>
    <property type="gene ID" value="AT1G59675"/>
</dbReference>
<dbReference type="KEGG" id="ath:AT1G59675"/>
<dbReference type="Araport" id="AT1G59675"/>
<dbReference type="TAIR" id="AT1G59675"/>
<dbReference type="HOGENOM" id="CLU_1621278_0_0_1"/>
<dbReference type="InParanoid" id="Q9LQ47"/>
<dbReference type="OrthoDB" id="1101619at2759"/>
<dbReference type="PhylomeDB" id="Q9LQ47"/>
<dbReference type="PRO" id="PR:Q9LQ47"/>
<dbReference type="Proteomes" id="UP000006548">
    <property type="component" value="Chromosome 1"/>
</dbReference>
<dbReference type="ExpressionAtlas" id="Q9LQ47">
    <property type="expression patterns" value="baseline"/>
</dbReference>
<dbReference type="CDD" id="cd22157">
    <property type="entry name" value="F-box_AtFBW1-like"/>
    <property type="match status" value="1"/>
</dbReference>
<dbReference type="Gene3D" id="1.20.1280.50">
    <property type="match status" value="1"/>
</dbReference>
<dbReference type="InterPro" id="IPR036047">
    <property type="entry name" value="F-box-like_dom_sf"/>
</dbReference>
<dbReference type="InterPro" id="IPR001810">
    <property type="entry name" value="F-box_dom"/>
</dbReference>
<dbReference type="PANTHER" id="PTHR31111">
    <property type="entry name" value="BNAA05G37150D PROTEIN-RELATED"/>
    <property type="match status" value="1"/>
</dbReference>
<dbReference type="PANTHER" id="PTHR31111:SF138">
    <property type="entry name" value="F-BOX ASSOCIATED DOMAIN-CONTAINING PROTEIN"/>
    <property type="match status" value="1"/>
</dbReference>
<dbReference type="Pfam" id="PF00646">
    <property type="entry name" value="F-box"/>
    <property type="match status" value="1"/>
</dbReference>
<dbReference type="SUPFAM" id="SSF81383">
    <property type="entry name" value="F-box domain"/>
    <property type="match status" value="1"/>
</dbReference>
<organism>
    <name type="scientific">Arabidopsis thaliana</name>
    <name type="common">Mouse-ear cress</name>
    <dbReference type="NCBI Taxonomy" id="3702"/>
    <lineage>
        <taxon>Eukaryota</taxon>
        <taxon>Viridiplantae</taxon>
        <taxon>Streptophyta</taxon>
        <taxon>Embryophyta</taxon>
        <taxon>Tracheophyta</taxon>
        <taxon>Spermatophyta</taxon>
        <taxon>Magnoliopsida</taxon>
        <taxon>eudicotyledons</taxon>
        <taxon>Gunneridae</taxon>
        <taxon>Pentapetalae</taxon>
        <taxon>rosids</taxon>
        <taxon>malvids</taxon>
        <taxon>Brassicales</taxon>
        <taxon>Brassicaceae</taxon>
        <taxon>Camelineae</taxon>
        <taxon>Arabidopsis</taxon>
    </lineage>
</organism>
<protein>
    <recommendedName>
        <fullName>Putative F-box protein At1g59675</fullName>
    </recommendedName>
</protein>
<proteinExistence type="predicted"/>
<keyword id="KW-1185">Reference proteome</keyword>
<feature type="chain" id="PRO_0000283340" description="Putative F-box protein At1g59675">
    <location>
        <begin position="1"/>
        <end position="164"/>
    </location>
</feature>
<feature type="domain" description="F-box">
    <location>
        <begin position="9"/>
        <end position="56"/>
    </location>
</feature>
<reference key="1">
    <citation type="journal article" date="2000" name="Nature">
        <title>Sequence and analysis of chromosome 1 of the plant Arabidopsis thaliana.</title>
        <authorList>
            <person name="Theologis A."/>
            <person name="Ecker J.R."/>
            <person name="Palm C.J."/>
            <person name="Federspiel N.A."/>
            <person name="Kaul S."/>
            <person name="White O."/>
            <person name="Alonso J."/>
            <person name="Altafi H."/>
            <person name="Araujo R."/>
            <person name="Bowman C.L."/>
            <person name="Brooks S.Y."/>
            <person name="Buehler E."/>
            <person name="Chan A."/>
            <person name="Chao Q."/>
            <person name="Chen H."/>
            <person name="Cheuk R.F."/>
            <person name="Chin C.W."/>
            <person name="Chung M.K."/>
            <person name="Conn L."/>
            <person name="Conway A.B."/>
            <person name="Conway A.R."/>
            <person name="Creasy T.H."/>
            <person name="Dewar K."/>
            <person name="Dunn P."/>
            <person name="Etgu P."/>
            <person name="Feldblyum T.V."/>
            <person name="Feng J.-D."/>
            <person name="Fong B."/>
            <person name="Fujii C.Y."/>
            <person name="Gill J.E."/>
            <person name="Goldsmith A.D."/>
            <person name="Haas B."/>
            <person name="Hansen N.F."/>
            <person name="Hughes B."/>
            <person name="Huizar L."/>
            <person name="Hunter J.L."/>
            <person name="Jenkins J."/>
            <person name="Johnson-Hopson C."/>
            <person name="Khan S."/>
            <person name="Khaykin E."/>
            <person name="Kim C.J."/>
            <person name="Koo H.L."/>
            <person name="Kremenetskaia I."/>
            <person name="Kurtz D.B."/>
            <person name="Kwan A."/>
            <person name="Lam B."/>
            <person name="Langin-Hooper S."/>
            <person name="Lee A."/>
            <person name="Lee J.M."/>
            <person name="Lenz C.A."/>
            <person name="Li J.H."/>
            <person name="Li Y.-P."/>
            <person name="Lin X."/>
            <person name="Liu S.X."/>
            <person name="Liu Z.A."/>
            <person name="Luros J.S."/>
            <person name="Maiti R."/>
            <person name="Marziali A."/>
            <person name="Militscher J."/>
            <person name="Miranda M."/>
            <person name="Nguyen M."/>
            <person name="Nierman W.C."/>
            <person name="Osborne B.I."/>
            <person name="Pai G."/>
            <person name="Peterson J."/>
            <person name="Pham P.K."/>
            <person name="Rizzo M."/>
            <person name="Rooney T."/>
            <person name="Rowley D."/>
            <person name="Sakano H."/>
            <person name="Salzberg S.L."/>
            <person name="Schwartz J.R."/>
            <person name="Shinn P."/>
            <person name="Southwick A.M."/>
            <person name="Sun H."/>
            <person name="Tallon L.J."/>
            <person name="Tambunga G."/>
            <person name="Toriumi M.J."/>
            <person name="Town C.D."/>
            <person name="Utterback T."/>
            <person name="Van Aken S."/>
            <person name="Vaysberg M."/>
            <person name="Vysotskaia V.S."/>
            <person name="Walker M."/>
            <person name="Wu D."/>
            <person name="Yu G."/>
            <person name="Fraser C.M."/>
            <person name="Venter J.C."/>
            <person name="Davis R.W."/>
        </authorList>
    </citation>
    <scope>NUCLEOTIDE SEQUENCE [LARGE SCALE GENOMIC DNA]</scope>
    <source>
        <strain>cv. Columbia</strain>
    </source>
</reference>
<reference key="2">
    <citation type="journal article" date="2017" name="Plant J.">
        <title>Araport11: a complete reannotation of the Arabidopsis thaliana reference genome.</title>
        <authorList>
            <person name="Cheng C.Y."/>
            <person name="Krishnakumar V."/>
            <person name="Chan A.P."/>
            <person name="Thibaud-Nissen F."/>
            <person name="Schobel S."/>
            <person name="Town C.D."/>
        </authorList>
    </citation>
    <scope>GENOME REANNOTATION</scope>
    <source>
        <strain>cv. Columbia</strain>
    </source>
</reference>
<name>FB66_ARATH</name>
<sequence>MSSRDNDTSQSDHVPLDLTIEILSRLPAKSVGRFRSVSKLWSANTTSQNFINSFATGSLASRPSVLLTVRKGDILFVFSYPVDKNSSDGQFTCVGSYQLTNPNFGNLSRYHFLKWTQYRTKSYTSKMRNSIREVETVGDEVRLSDKYMYTMNVYPNHIESLVSL</sequence>
<gene>
    <name type="ordered locus">At1g59675</name>
    <name type="ORF">T30E16.26</name>
</gene>